<dbReference type="EMBL" id="CR859515">
    <property type="protein sequence ID" value="CAH91683.1"/>
    <property type="molecule type" value="mRNA"/>
</dbReference>
<dbReference type="RefSeq" id="NP_001125986.1">
    <property type="nucleotide sequence ID" value="NM_001132514.1"/>
</dbReference>
<dbReference type="RefSeq" id="XP_024098718.1">
    <property type="nucleotide sequence ID" value="XM_024242950.3"/>
</dbReference>
<dbReference type="RefSeq" id="XP_054404628.1">
    <property type="nucleotide sequence ID" value="XM_054548653.1"/>
</dbReference>
<dbReference type="RefSeq" id="XP_063568535.1">
    <property type="nucleotide sequence ID" value="XM_063712465.1"/>
</dbReference>
<dbReference type="RefSeq" id="XP_063568536.1">
    <property type="nucleotide sequence ID" value="XM_063712466.1"/>
</dbReference>
<dbReference type="RefSeq" id="XP_063568537.1">
    <property type="nucleotide sequence ID" value="XM_063712467.1"/>
</dbReference>
<dbReference type="RefSeq" id="XP_063568538.1">
    <property type="nucleotide sequence ID" value="XM_063712468.1"/>
</dbReference>
<dbReference type="RefSeq" id="XP_063568539.1">
    <property type="nucleotide sequence ID" value="XM_063712469.1"/>
</dbReference>
<dbReference type="SMR" id="Q5R977"/>
<dbReference type="FunCoup" id="Q5R977">
    <property type="interactions" value="1159"/>
</dbReference>
<dbReference type="STRING" id="9601.ENSPPYP00000023730"/>
<dbReference type="Ensembl" id="ENSPPYT00000034027.2">
    <property type="protein sequence ID" value="ENSPPYP00000023730.2"/>
    <property type="gene ID" value="ENSPPYG00000029836.2"/>
</dbReference>
<dbReference type="GeneID" id="100172925"/>
<dbReference type="KEGG" id="pon:100172925"/>
<dbReference type="CTD" id="285172"/>
<dbReference type="eggNOG" id="KOG4688">
    <property type="taxonomic scope" value="Eukaryota"/>
</dbReference>
<dbReference type="GeneTree" id="ENSGT00390000011295"/>
<dbReference type="InParanoid" id="Q5R977"/>
<dbReference type="OMA" id="SIYHEXF"/>
<dbReference type="OrthoDB" id="18937at2759"/>
<dbReference type="Proteomes" id="UP000001595">
    <property type="component" value="Chromosome 2B"/>
</dbReference>
<dbReference type="GO" id="GO:0005829">
    <property type="term" value="C:cytosol"/>
    <property type="evidence" value="ECO:0007669"/>
    <property type="project" value="UniProtKB-SubCell"/>
</dbReference>
<dbReference type="GO" id="GO:0005886">
    <property type="term" value="C:plasma membrane"/>
    <property type="evidence" value="ECO:0007669"/>
    <property type="project" value="UniProtKB-SubCell"/>
</dbReference>
<dbReference type="GO" id="GO:0046854">
    <property type="term" value="P:phosphatidylinositol phosphate biosynthetic process"/>
    <property type="evidence" value="ECO:0007669"/>
    <property type="project" value="TreeGrafter"/>
</dbReference>
<dbReference type="GO" id="GO:0072659">
    <property type="term" value="P:protein localization to plasma membrane"/>
    <property type="evidence" value="ECO:0007669"/>
    <property type="project" value="TreeGrafter"/>
</dbReference>
<dbReference type="InterPro" id="IPR018619">
    <property type="entry name" value="Hyccin"/>
</dbReference>
<dbReference type="PANTHER" id="PTHR31220:SF3">
    <property type="entry name" value="HYCCIN 2"/>
    <property type="match status" value="1"/>
</dbReference>
<dbReference type="PANTHER" id="PTHR31220">
    <property type="entry name" value="HYCCIN RELATED"/>
    <property type="match status" value="1"/>
</dbReference>
<dbReference type="Pfam" id="PF09790">
    <property type="entry name" value="Hyccin"/>
    <property type="match status" value="1"/>
</dbReference>
<keyword id="KW-1003">Cell membrane</keyword>
<keyword id="KW-0963">Cytoplasm</keyword>
<keyword id="KW-0472">Membrane</keyword>
<keyword id="KW-0597">Phosphoprotein</keyword>
<keyword id="KW-1185">Reference proteome</keyword>
<protein>
    <recommendedName>
        <fullName>Hyccin 2</fullName>
    </recommendedName>
</protein>
<organism>
    <name type="scientific">Pongo abelii</name>
    <name type="common">Sumatran orangutan</name>
    <name type="synonym">Pongo pygmaeus abelii</name>
    <dbReference type="NCBI Taxonomy" id="9601"/>
    <lineage>
        <taxon>Eukaryota</taxon>
        <taxon>Metazoa</taxon>
        <taxon>Chordata</taxon>
        <taxon>Craniata</taxon>
        <taxon>Vertebrata</taxon>
        <taxon>Euteleostomi</taxon>
        <taxon>Mammalia</taxon>
        <taxon>Eutheria</taxon>
        <taxon>Euarchontoglires</taxon>
        <taxon>Primates</taxon>
        <taxon>Haplorrhini</taxon>
        <taxon>Catarrhini</taxon>
        <taxon>Hominidae</taxon>
        <taxon>Pongo</taxon>
    </lineage>
</organism>
<reference key="1">
    <citation type="submission" date="2004-11" db="EMBL/GenBank/DDBJ databases">
        <authorList>
            <consortium name="The German cDNA consortium"/>
        </authorList>
    </citation>
    <scope>NUCLEOTIDE SEQUENCE [LARGE SCALE MRNA]</scope>
    <source>
        <tissue>Brain cortex</tissue>
    </source>
</reference>
<gene>
    <name type="primary">HYCC2</name>
    <name type="synonym">FAM126B</name>
</gene>
<comment type="function">
    <text evidence="2">Component of a complex required to localize phosphatidylinositol 4-kinase (PI4K) to the plasma membrane.</text>
</comment>
<comment type="subunit">
    <text evidence="2">Component of a phosphatidylinositol 4-kinase (PI4K) complex, composed of PI4KA, EFR3 (EFR3A or EFR3B), TTC7 (TTC7A or TTC7B) and HYCC (HYCC1 or HYCC2).</text>
</comment>
<comment type="subcellular location">
    <subcellularLocation>
        <location evidence="3">Cytoplasm</location>
        <location evidence="3">Cytosol</location>
    </subcellularLocation>
    <subcellularLocation>
        <location evidence="3">Cell membrane</location>
    </subcellularLocation>
</comment>
<comment type="similarity">
    <text evidence="5">Belongs to the Hyccin family.</text>
</comment>
<proteinExistence type="evidence at transcript level"/>
<evidence type="ECO:0000250" key="1">
    <source>
        <dbReference type="UniProtKB" id="Q8C729"/>
    </source>
</evidence>
<evidence type="ECO:0000250" key="2">
    <source>
        <dbReference type="UniProtKB" id="Q8IXS8"/>
    </source>
</evidence>
<evidence type="ECO:0000250" key="3">
    <source>
        <dbReference type="UniProtKB" id="Q9BYI3"/>
    </source>
</evidence>
<evidence type="ECO:0000256" key="4">
    <source>
        <dbReference type="SAM" id="MobiDB-lite"/>
    </source>
</evidence>
<evidence type="ECO:0000305" key="5"/>
<accession>Q5R977</accession>
<name>HYCC2_PONAB</name>
<sequence length="530" mass="58634">MLGTDRCVVEEWLSEFKALPDTQITSYAATLHRKKTLVPALYKVIQDSNNELLEPVCHQLFELYRSSEVRLKRFTLQFLPELMWVYLRLTVSRDRQSNGCIEALLLGIYNLEIADKDGNNKVLSFTIPSLSKPSIYHEPSTIGSMALTEGALCQHDLIRVVYSDLHPQRETFTAQNRFEVLSFLMLCYNSAIVYMPASSYQSLCRMGSRVCVSGFPRQHEKHWKELCGRIVLDPEFMVQLLTGVYYAMYNGQWDLGQEVLDDIIYRAQLELFSQPLLVANAMKNSLPFDAPDSTQEGQKVLKVEVTPTVPRISRTAITTASIRRHRWRREGAEGVNGGEESVNLNDADEGFSSGASLSSQPIGTKPSSSSQRGSLRKVATGRSAKDKETASAIKSSESPRDSVVRKQYVQQPTDLSVDSVELTPMKKHLSLPAGQVVPKTNSLSLIRTASASSSKSFDYVNGSQASTSIGVGTEGGTNLAANNANRYSTVSLQEDRLGQAGEGKELLSPGAPLTKQSRSPSFNMQLISQV</sequence>
<feature type="chain" id="PRO_0000278096" description="Hyccin 2">
    <location>
        <begin position="1"/>
        <end position="530"/>
    </location>
</feature>
<feature type="region of interest" description="Disordered" evidence="4">
    <location>
        <begin position="328"/>
        <end position="410"/>
    </location>
</feature>
<feature type="region of interest" description="Disordered" evidence="4">
    <location>
        <begin position="498"/>
        <end position="530"/>
    </location>
</feature>
<feature type="compositionally biased region" description="Polar residues" evidence="4">
    <location>
        <begin position="353"/>
        <end position="373"/>
    </location>
</feature>
<feature type="compositionally biased region" description="Polar residues" evidence="4">
    <location>
        <begin position="514"/>
        <end position="530"/>
    </location>
</feature>
<feature type="modified residue" description="Phosphothreonine" evidence="2">
    <location>
        <position position="30"/>
    </location>
</feature>
<feature type="modified residue" description="Phosphothreonine" evidence="2">
    <location>
        <position position="306"/>
    </location>
</feature>
<feature type="modified residue" description="Phosphoserine" evidence="2">
    <location>
        <position position="321"/>
    </location>
</feature>
<feature type="modified residue" description="Phosphoserine" evidence="1">
    <location>
        <position position="341"/>
    </location>
</feature>
<feature type="modified residue" description="Phosphoserine" evidence="2">
    <location>
        <position position="430"/>
    </location>
</feature>
<feature type="modified residue" description="Phosphoserine" evidence="2">
    <location>
        <position position="442"/>
    </location>
</feature>
<feature type="modified residue" description="Phosphoserine" evidence="2">
    <location>
        <position position="444"/>
    </location>
</feature>
<feature type="modified residue" description="Phosphoserine" evidence="2">
    <location>
        <position position="491"/>
    </location>
</feature>